<gene>
    <name type="primary">estP</name>
</gene>
<dbReference type="EC" id="3.1.1.88"/>
<dbReference type="EMBL" id="AY995176">
    <property type="protein sequence ID" value="AAX93318.1"/>
    <property type="molecule type" value="Genomic_DNA"/>
</dbReference>
<dbReference type="SMR" id="Q52NW7"/>
<dbReference type="KEGG" id="ag:AAX93318"/>
<dbReference type="BioCyc" id="MetaCyc:MONOMER-16247"/>
<dbReference type="BRENDA" id="3.1.1.1">
    <property type="organism ID" value="2818"/>
</dbReference>
<dbReference type="GO" id="GO:0102209">
    <property type="term" value="F:trans-permethrin hydrolase activity"/>
    <property type="evidence" value="ECO:0007669"/>
    <property type="project" value="UniProtKB-EC"/>
</dbReference>
<dbReference type="InterPro" id="IPR007505">
    <property type="entry name" value="PDDEXK_7"/>
</dbReference>
<dbReference type="Pfam" id="PF04411">
    <property type="entry name" value="PDDEXK_7"/>
    <property type="match status" value="1"/>
</dbReference>
<accession>Q52NW7</accession>
<sequence length="637" mass="73427">MEICTKGSRKHLTSRASEPSYNVPENQYVLYVVSSTLSIVKQLVKVAESKKSRFSGAIEKLNERLDSLKDYRIINRDLVVKDLERLKKRFDTEVINAELSEQLAKINVNLSRSYSEKGYLRLEKATGSENEWWAKIKPSQNDDWQQFEPDGYTIFSSRDHYASLFKSYSDYEIEAKIPLPLRRGKAVVLYPEYISRICVLPESRSIQREQENFTKLRDKGIALSKKDWQAKLTTDELAEQEKERATINKRLGYFATEHEKVGIVHKALEPKLKPFQQIEKEWRQCKVKSKSTFPNSMTFVQNPAYQAVHSGFKKLKEQIGLADEDILLSLEKIEAIGLVNMPLLYERWCLLQIIKVLTQAFRYQPEDNWKRKLIANIQGNEEQISIQFFNPSVSRAITLQYEPFLANGKRPDFVLDVEAITKSGNQISKRLVVDAKYYSAAYLKQRGGIGGVIHELYNGKDYSECQENSVFVLHPVLDAVEKVVSPQEWAKDSYLGELSMFDWEPAHHQRQATNYGAVCANPMKSQRYLDEIQRMLGMFLQYGIEDNTSFRGASDDTHAVNFCVSCGSEKVVDVTKSMSSNNQKRWYRCNECTHFTVYTHCGTCNTRLIKNGEYWTYLSLMPMSSINIKCPNCESPV</sequence>
<name>PYRHY_KLESP</name>
<protein>
    <recommendedName>
        <fullName>Pyrethroid hydrolase</fullName>
        <ecNumber>3.1.1.88</ecNumber>
    </recommendedName>
</protein>
<comment type="function">
    <text evidence="1">Catalyzes the hydrolysis of pyrethroids pesticides. Hydrolyzes cis-permethrin at approximately equal rate to trans-permethrin.</text>
</comment>
<comment type="catalytic activity">
    <reaction evidence="1">
        <text>(-)-trans-permethrin + H2O = (3-phenoxyphenyl)methanol + (1S,3R)-3-(2,2-dichlorovinyl)-2,2-dimethylcyclopropanecarboxylate + H(+)</text>
        <dbReference type="Rhea" id="RHEA:30283"/>
        <dbReference type="ChEBI" id="CHEBI:15377"/>
        <dbReference type="ChEBI" id="CHEBI:15378"/>
        <dbReference type="ChEBI" id="CHEBI:62523"/>
        <dbReference type="ChEBI" id="CHEBI:62527"/>
        <dbReference type="ChEBI" id="CHEBI:62531"/>
        <dbReference type="EC" id="3.1.1.88"/>
    </reaction>
</comment>
<comment type="activity regulation">
    <text evidence="1">Inhibited by Hg(2+), Ag(+) and rho-chloromercuribenzoate.</text>
</comment>
<comment type="biophysicochemical properties">
    <kinetics>
        <KM evidence="1">0.16 uM for cis-permethrin</KM>
        <KM evidence="1">0.11 uM for trans-permethrin</KM>
        <KM evidence="1">0.21 uM for cypermethrin</KM>
        <KM evidence="1">0.91 uM for fenvalerate</KM>
        <KM evidence="1">1.23 uM for deltamethrin</KM>
        <KM evidence="1">0.87 uM for malathion</KM>
        <text>kcat is 1.05 sec(-1) with cis-permethrin as substrate. kcat is 1.14 sec(-1) with trans-permethrin as substrate. kcat is 0.288 sec(-1) with cypermethrin as substrate. kcat is 0.103 sec(-1) with fenvalerate as substrate. kcat is 0.016 sec(-1) with deltamethrin as substrate. kcat is 0.07 sec(-1) with malathion as substrate.</text>
    </kinetics>
    <phDependence>
        <text evidence="1">Optimum pH is 7.0.</text>
    </phDependence>
</comment>
<organism>
    <name type="scientific">Klebsiella sp</name>
    <dbReference type="NCBI Taxonomy" id="576"/>
    <lineage>
        <taxon>Bacteria</taxon>
        <taxon>Pseudomonadati</taxon>
        <taxon>Pseudomonadota</taxon>
        <taxon>Gammaproteobacteria</taxon>
        <taxon>Enterobacterales</taxon>
        <taxon>Enterobacteriaceae</taxon>
        <taxon>Klebsiella/Raoultella group</taxon>
        <taxon>Klebsiella</taxon>
    </lineage>
</organism>
<evidence type="ECO:0000269" key="1">
    <source>
    </source>
</evidence>
<feature type="chain" id="PRO_0000424209" description="Pyrethroid hydrolase">
    <location>
        <begin position="1"/>
        <end position="637"/>
    </location>
</feature>
<proteinExistence type="evidence at protein level"/>
<reference key="1">
    <citation type="journal article" date="2006" name="J. Agric. Food Chem.">
        <title>Molecular cloning, purification, and biochemical characterization of a novel pyrethroid-hydrolyzing esterase from Klebsiella sp. strain ZD112.</title>
        <authorList>
            <person name="Wu P.C."/>
            <person name="Liu Y.H."/>
            <person name="Wang Z.Y."/>
            <person name="Zhang X.Y."/>
            <person name="Li H."/>
            <person name="Liang W.Q."/>
            <person name="Luo N."/>
            <person name="Hu J.M."/>
            <person name="Lu J.Q."/>
            <person name="Luan T.G."/>
            <person name="Cao L.X."/>
        </authorList>
    </citation>
    <scope>NUCLEOTIDE SEQUENCE [GENOMIC DNA]</scope>
    <scope>PROTEIN SEQUENCE OF 1-18</scope>
    <scope>FUNCTION</scope>
    <scope>BIOPHYSICOCHEMICAL PROPERTIES</scope>
    <scope>ACTIVITY REGULATION</scope>
    <scope>CATALYTIC ACTIVITY</scope>
    <source>
        <strain>ZD112</strain>
    </source>
</reference>
<keyword id="KW-0903">Direct protein sequencing</keyword>
<keyword id="KW-0378">Hydrolase</keyword>
<keyword id="KW-0719">Serine esterase</keyword>